<gene>
    <name type="primary">OR2T6</name>
    <name type="synonym">OR2T6P</name>
    <name type="synonym">OR2T9</name>
</gene>
<reference key="1">
    <citation type="submission" date="2001-07" db="EMBL/GenBank/DDBJ databases">
        <title>Genome-wide discovery and analysis of human seven transmembrane helix receptor genes.</title>
        <authorList>
            <person name="Suwa M."/>
            <person name="Sato T."/>
            <person name="Okouchi I."/>
            <person name="Arita M."/>
            <person name="Futami K."/>
            <person name="Matsumoto S."/>
            <person name="Tsutsumi S."/>
            <person name="Aburatani H."/>
            <person name="Asai K."/>
            <person name="Akiyama Y."/>
        </authorList>
    </citation>
    <scope>NUCLEOTIDE SEQUENCE [GENOMIC DNA]</scope>
</reference>
<reference key="2">
    <citation type="journal article" date="2006" name="Nature">
        <title>The DNA sequence and biological annotation of human chromosome 1.</title>
        <authorList>
            <person name="Gregory S.G."/>
            <person name="Barlow K.F."/>
            <person name="McLay K.E."/>
            <person name="Kaul R."/>
            <person name="Swarbreck D."/>
            <person name="Dunham A."/>
            <person name="Scott C.E."/>
            <person name="Howe K.L."/>
            <person name="Woodfine K."/>
            <person name="Spencer C.C.A."/>
            <person name="Jones M.C."/>
            <person name="Gillson C."/>
            <person name="Searle S."/>
            <person name="Zhou Y."/>
            <person name="Kokocinski F."/>
            <person name="McDonald L."/>
            <person name="Evans R."/>
            <person name="Phillips K."/>
            <person name="Atkinson A."/>
            <person name="Cooper R."/>
            <person name="Jones C."/>
            <person name="Hall R.E."/>
            <person name="Andrews T.D."/>
            <person name="Lloyd C."/>
            <person name="Ainscough R."/>
            <person name="Almeida J.P."/>
            <person name="Ambrose K.D."/>
            <person name="Anderson F."/>
            <person name="Andrew R.W."/>
            <person name="Ashwell R.I.S."/>
            <person name="Aubin K."/>
            <person name="Babbage A.K."/>
            <person name="Bagguley C.L."/>
            <person name="Bailey J."/>
            <person name="Beasley H."/>
            <person name="Bethel G."/>
            <person name="Bird C.P."/>
            <person name="Bray-Allen S."/>
            <person name="Brown J.Y."/>
            <person name="Brown A.J."/>
            <person name="Buckley D."/>
            <person name="Burton J."/>
            <person name="Bye J."/>
            <person name="Carder C."/>
            <person name="Chapman J.C."/>
            <person name="Clark S.Y."/>
            <person name="Clarke G."/>
            <person name="Clee C."/>
            <person name="Cobley V."/>
            <person name="Collier R.E."/>
            <person name="Corby N."/>
            <person name="Coville G.J."/>
            <person name="Davies J."/>
            <person name="Deadman R."/>
            <person name="Dunn M."/>
            <person name="Earthrowl M."/>
            <person name="Ellington A.G."/>
            <person name="Errington H."/>
            <person name="Frankish A."/>
            <person name="Frankland J."/>
            <person name="French L."/>
            <person name="Garner P."/>
            <person name="Garnett J."/>
            <person name="Gay L."/>
            <person name="Ghori M.R.J."/>
            <person name="Gibson R."/>
            <person name="Gilby L.M."/>
            <person name="Gillett W."/>
            <person name="Glithero R.J."/>
            <person name="Grafham D.V."/>
            <person name="Griffiths C."/>
            <person name="Griffiths-Jones S."/>
            <person name="Grocock R."/>
            <person name="Hammond S."/>
            <person name="Harrison E.S.I."/>
            <person name="Hart E."/>
            <person name="Haugen E."/>
            <person name="Heath P.D."/>
            <person name="Holmes S."/>
            <person name="Holt K."/>
            <person name="Howden P.J."/>
            <person name="Hunt A.R."/>
            <person name="Hunt S.E."/>
            <person name="Hunter G."/>
            <person name="Isherwood J."/>
            <person name="James R."/>
            <person name="Johnson C."/>
            <person name="Johnson D."/>
            <person name="Joy A."/>
            <person name="Kay M."/>
            <person name="Kershaw J.K."/>
            <person name="Kibukawa M."/>
            <person name="Kimberley A.M."/>
            <person name="King A."/>
            <person name="Knights A.J."/>
            <person name="Lad H."/>
            <person name="Laird G."/>
            <person name="Lawlor S."/>
            <person name="Leongamornlert D.A."/>
            <person name="Lloyd D.M."/>
            <person name="Loveland J."/>
            <person name="Lovell J."/>
            <person name="Lush M.J."/>
            <person name="Lyne R."/>
            <person name="Martin S."/>
            <person name="Mashreghi-Mohammadi M."/>
            <person name="Matthews L."/>
            <person name="Matthews N.S.W."/>
            <person name="McLaren S."/>
            <person name="Milne S."/>
            <person name="Mistry S."/>
            <person name="Moore M.J.F."/>
            <person name="Nickerson T."/>
            <person name="O'Dell C.N."/>
            <person name="Oliver K."/>
            <person name="Palmeiri A."/>
            <person name="Palmer S.A."/>
            <person name="Parker A."/>
            <person name="Patel D."/>
            <person name="Pearce A.V."/>
            <person name="Peck A.I."/>
            <person name="Pelan S."/>
            <person name="Phelps K."/>
            <person name="Phillimore B.J."/>
            <person name="Plumb R."/>
            <person name="Rajan J."/>
            <person name="Raymond C."/>
            <person name="Rouse G."/>
            <person name="Saenphimmachak C."/>
            <person name="Sehra H.K."/>
            <person name="Sheridan E."/>
            <person name="Shownkeen R."/>
            <person name="Sims S."/>
            <person name="Skuce C.D."/>
            <person name="Smith M."/>
            <person name="Steward C."/>
            <person name="Subramanian S."/>
            <person name="Sycamore N."/>
            <person name="Tracey A."/>
            <person name="Tromans A."/>
            <person name="Van Helmond Z."/>
            <person name="Wall M."/>
            <person name="Wallis J.M."/>
            <person name="White S."/>
            <person name="Whitehead S.L."/>
            <person name="Wilkinson J.E."/>
            <person name="Willey D.L."/>
            <person name="Williams H."/>
            <person name="Wilming L."/>
            <person name="Wray P.W."/>
            <person name="Wu Z."/>
            <person name="Coulson A."/>
            <person name="Vaudin M."/>
            <person name="Sulston J.E."/>
            <person name="Durbin R.M."/>
            <person name="Hubbard T."/>
            <person name="Wooster R."/>
            <person name="Dunham I."/>
            <person name="Carter N.P."/>
            <person name="McVean G."/>
            <person name="Ross M.T."/>
            <person name="Harrow J."/>
            <person name="Olson M.V."/>
            <person name="Beck S."/>
            <person name="Rogers J."/>
            <person name="Bentley D.R."/>
        </authorList>
    </citation>
    <scope>NUCLEOTIDE SEQUENCE [LARGE SCALE GENOMIC DNA]</scope>
</reference>
<sequence>MNENNETLTRGFTLMGLFTHNKCSGFFFGVICAVFFMAMIANGVMIFLINIDPHLHTPMYFLLSHLSVIDTLYISTIVPKMLVDYLMGEGTISFIACTAQCFLYMGFMGAEFFLLGLMAYDRYVAICNPLRYPVLISWRVCWMILASSWFGGALDSFLLTPITMSLPFCASHQINHFFCEAPTMLRLACGDKTTYETVMYVCCVAMLLIPFSVVTASYTRILITVHQMTSAEGRKKAFATCSSHMMVVTLFYGAALYTYTLPQSYHTPIKDKVFSAFYTILTPLLNPLIYSLRNRDVMGALKRVVARC</sequence>
<name>OR2T6_HUMAN</name>
<dbReference type="EMBL" id="AB065438">
    <property type="protein sequence ID" value="BAC05705.1"/>
    <property type="status" value="ALT_SEQ"/>
    <property type="molecule type" value="Genomic_DNA"/>
</dbReference>
<dbReference type="EMBL" id="AC138089">
    <property type="status" value="NOT_ANNOTATED_CDS"/>
    <property type="molecule type" value="Genomic_DNA"/>
</dbReference>
<dbReference type="CCDS" id="CCDS31114.1"/>
<dbReference type="RefSeq" id="NP_001005471.1">
    <property type="nucleotide sequence ID" value="NM_001005471.2"/>
</dbReference>
<dbReference type="SMR" id="Q8NHC8"/>
<dbReference type="BioGRID" id="129055">
    <property type="interactions" value="1"/>
</dbReference>
<dbReference type="FunCoup" id="Q8NHC8">
    <property type="interactions" value="521"/>
</dbReference>
<dbReference type="IntAct" id="Q8NHC8">
    <property type="interactions" value="1"/>
</dbReference>
<dbReference type="STRING" id="9606.ENSP00000493366"/>
<dbReference type="GlyCosmos" id="Q8NHC8">
    <property type="glycosylation" value="1 site, No reported glycans"/>
</dbReference>
<dbReference type="GlyGen" id="Q8NHC8">
    <property type="glycosylation" value="1 site"/>
</dbReference>
<dbReference type="iPTMnet" id="Q8NHC8"/>
<dbReference type="PhosphoSitePlus" id="Q8NHC8"/>
<dbReference type="BioMuta" id="OR2T6"/>
<dbReference type="DMDM" id="166214964"/>
<dbReference type="MassIVE" id="Q8NHC8"/>
<dbReference type="PaxDb" id="9606-ENSP00000347965"/>
<dbReference type="Antibodypedia" id="68598">
    <property type="antibodies" value="65 antibodies from 17 providers"/>
</dbReference>
<dbReference type="DNASU" id="254879"/>
<dbReference type="Ensembl" id="ENST00000612137.1">
    <property type="protein sequence ID" value="ENSP00000478358.1"/>
    <property type="gene ID" value="ENSG00000278659.1"/>
</dbReference>
<dbReference type="Ensembl" id="ENST00000621336.1">
    <property type="protein sequence ID" value="ENSP00000481800.1"/>
    <property type="gene ID" value="ENSG00000278689.1"/>
</dbReference>
<dbReference type="Ensembl" id="ENST00000641644.1">
    <property type="protein sequence ID" value="ENSP00000493366.1"/>
    <property type="gene ID" value="ENSG00000198104.4"/>
</dbReference>
<dbReference type="Ensembl" id="ENST00000709575.1">
    <property type="protein sequence ID" value="ENSP00000517769.1"/>
    <property type="gene ID" value="ENSG00000292016.1"/>
</dbReference>
<dbReference type="GeneID" id="254879"/>
<dbReference type="KEGG" id="hsa:254879"/>
<dbReference type="MANE-Select" id="ENST00000641644.1">
    <property type="protein sequence ID" value="ENSP00000493366.1"/>
    <property type="RefSeq nucleotide sequence ID" value="NM_001005471.2"/>
    <property type="RefSeq protein sequence ID" value="NP_001005471.1"/>
</dbReference>
<dbReference type="UCSC" id="uc001iei.1">
    <property type="organism name" value="human"/>
</dbReference>
<dbReference type="AGR" id="HGNC:15018"/>
<dbReference type="CTD" id="254879"/>
<dbReference type="GeneCards" id="OR2T6"/>
<dbReference type="HGNC" id="HGNC:15018">
    <property type="gene designation" value="OR2T6"/>
</dbReference>
<dbReference type="HPA" id="ENSG00000198104">
    <property type="expression patterns" value="Not detected"/>
</dbReference>
<dbReference type="neXtProt" id="NX_Q8NHC8"/>
<dbReference type="PharmGKB" id="PA32206"/>
<dbReference type="VEuPathDB" id="HostDB:ENSG00000198104"/>
<dbReference type="eggNOG" id="ENOG502RTYZ">
    <property type="taxonomic scope" value="Eukaryota"/>
</dbReference>
<dbReference type="GeneTree" id="ENSGT01130000278260"/>
<dbReference type="HOGENOM" id="CLU_012526_1_2_1"/>
<dbReference type="InParanoid" id="Q8NHC8"/>
<dbReference type="OMA" id="MSLPFCS"/>
<dbReference type="OrthoDB" id="10017003at2759"/>
<dbReference type="PAN-GO" id="Q8NHC8">
    <property type="GO annotations" value="0 GO annotations based on evolutionary models"/>
</dbReference>
<dbReference type="PhylomeDB" id="Q8NHC8"/>
<dbReference type="TreeFam" id="TF337295"/>
<dbReference type="PathwayCommons" id="Q8NHC8"/>
<dbReference type="Reactome" id="R-HSA-9752946">
    <property type="pathway name" value="Expression and translocation of olfactory receptors"/>
</dbReference>
<dbReference type="SignaLink" id="Q8NHC8"/>
<dbReference type="BioGRID-ORCS" id="254879">
    <property type="hits" value="7 hits in 749 CRISPR screens"/>
</dbReference>
<dbReference type="ChiTaRS" id="OR2T6">
    <property type="organism name" value="human"/>
</dbReference>
<dbReference type="GeneWiki" id="OR2T6"/>
<dbReference type="GenomeRNAi" id="254879"/>
<dbReference type="Pharos" id="Q8NHC8">
    <property type="development level" value="Tdark"/>
</dbReference>
<dbReference type="PRO" id="PR:Q8NHC8"/>
<dbReference type="Proteomes" id="UP000005640">
    <property type="component" value="Chromosome 1"/>
</dbReference>
<dbReference type="RNAct" id="Q8NHC8">
    <property type="molecule type" value="protein"/>
</dbReference>
<dbReference type="Bgee" id="ENSG00000198104">
    <property type="expression patterns" value="Expressed in primordial germ cell in gonad and 2 other cell types or tissues"/>
</dbReference>
<dbReference type="GO" id="GO:0005886">
    <property type="term" value="C:plasma membrane"/>
    <property type="evidence" value="ECO:0000318"/>
    <property type="project" value="GO_Central"/>
</dbReference>
<dbReference type="GO" id="GO:0004930">
    <property type="term" value="F:G protein-coupled receptor activity"/>
    <property type="evidence" value="ECO:0007669"/>
    <property type="project" value="UniProtKB-KW"/>
</dbReference>
<dbReference type="GO" id="GO:0004984">
    <property type="term" value="F:olfactory receptor activity"/>
    <property type="evidence" value="ECO:0000318"/>
    <property type="project" value="GO_Central"/>
</dbReference>
<dbReference type="GO" id="GO:0050911">
    <property type="term" value="P:detection of chemical stimulus involved in sensory perception of smell"/>
    <property type="evidence" value="ECO:0000318"/>
    <property type="project" value="GO_Central"/>
</dbReference>
<dbReference type="CDD" id="cd15421">
    <property type="entry name" value="7tmA_OR2T-like"/>
    <property type="match status" value="1"/>
</dbReference>
<dbReference type="FunFam" id="1.10.1220.70:FF:000001">
    <property type="entry name" value="Olfactory receptor"/>
    <property type="match status" value="1"/>
</dbReference>
<dbReference type="FunFam" id="1.20.1070.10:FF:000008">
    <property type="entry name" value="Olfactory receptor"/>
    <property type="match status" value="1"/>
</dbReference>
<dbReference type="Gene3D" id="1.20.1070.10">
    <property type="entry name" value="Rhodopsin 7-helix transmembrane proteins"/>
    <property type="match status" value="1"/>
</dbReference>
<dbReference type="InterPro" id="IPR000276">
    <property type="entry name" value="GPCR_Rhodpsn"/>
</dbReference>
<dbReference type="InterPro" id="IPR017452">
    <property type="entry name" value="GPCR_Rhodpsn_7TM"/>
</dbReference>
<dbReference type="InterPro" id="IPR000725">
    <property type="entry name" value="Olfact_rcpt"/>
</dbReference>
<dbReference type="PANTHER" id="PTHR26453">
    <property type="entry name" value="OLFACTORY RECEPTOR"/>
    <property type="match status" value="1"/>
</dbReference>
<dbReference type="Pfam" id="PF13853">
    <property type="entry name" value="7tm_4"/>
    <property type="match status" value="1"/>
</dbReference>
<dbReference type="PRINTS" id="PR00237">
    <property type="entry name" value="GPCRRHODOPSN"/>
</dbReference>
<dbReference type="PRINTS" id="PR00245">
    <property type="entry name" value="OLFACTORYR"/>
</dbReference>
<dbReference type="SUPFAM" id="SSF81321">
    <property type="entry name" value="Family A G protein-coupled receptor-like"/>
    <property type="match status" value="1"/>
</dbReference>
<dbReference type="PROSITE" id="PS00237">
    <property type="entry name" value="G_PROTEIN_RECEP_F1_1"/>
    <property type="match status" value="1"/>
</dbReference>
<dbReference type="PROSITE" id="PS50262">
    <property type="entry name" value="G_PROTEIN_RECEP_F1_2"/>
    <property type="match status" value="1"/>
</dbReference>
<keyword id="KW-1003">Cell membrane</keyword>
<keyword id="KW-1015">Disulfide bond</keyword>
<keyword id="KW-0297">G-protein coupled receptor</keyword>
<keyword id="KW-0325">Glycoprotein</keyword>
<keyword id="KW-0472">Membrane</keyword>
<keyword id="KW-0552">Olfaction</keyword>
<keyword id="KW-0675">Receptor</keyword>
<keyword id="KW-1185">Reference proteome</keyword>
<keyword id="KW-0716">Sensory transduction</keyword>
<keyword id="KW-0807">Transducer</keyword>
<keyword id="KW-0812">Transmembrane</keyword>
<keyword id="KW-1133">Transmembrane helix</keyword>
<accession>Q8NHC8</accession>
<accession>A6NE36</accession>
<comment type="function">
    <text evidence="3">Odorant receptor.</text>
</comment>
<comment type="subcellular location">
    <subcellularLocation>
        <location>Cell membrane</location>
        <topology>Multi-pass membrane protein</topology>
    </subcellularLocation>
</comment>
<comment type="similarity">
    <text evidence="2">Belongs to the G-protein coupled receptor 1 family.</text>
</comment>
<comment type="sequence caution" evidence="3">
    <conflict type="miscellaneous discrepancy">
        <sequence resource="EMBL-CDS" id="BAC05705"/>
    </conflict>
    <text>Hybrid of two separate genomic loci.</text>
</comment>
<comment type="online information" name="Human Olfactory Receptor Data Exploratorium (HORDE)">
    <link uri="http://genome.weizmann.ac.il/horde/card/index/symbol:OR2T6"/>
</comment>
<evidence type="ECO:0000255" key="1"/>
<evidence type="ECO:0000255" key="2">
    <source>
        <dbReference type="PROSITE-ProRule" id="PRU00521"/>
    </source>
</evidence>
<evidence type="ECO:0000305" key="3"/>
<proteinExistence type="inferred from homology"/>
<organism>
    <name type="scientific">Homo sapiens</name>
    <name type="common">Human</name>
    <dbReference type="NCBI Taxonomy" id="9606"/>
    <lineage>
        <taxon>Eukaryota</taxon>
        <taxon>Metazoa</taxon>
        <taxon>Chordata</taxon>
        <taxon>Craniata</taxon>
        <taxon>Vertebrata</taxon>
        <taxon>Euteleostomi</taxon>
        <taxon>Mammalia</taxon>
        <taxon>Eutheria</taxon>
        <taxon>Euarchontoglires</taxon>
        <taxon>Primates</taxon>
        <taxon>Haplorrhini</taxon>
        <taxon>Catarrhini</taxon>
        <taxon>Hominidae</taxon>
        <taxon>Homo</taxon>
    </lineage>
</organism>
<protein>
    <recommendedName>
        <fullName>Olfactory receptor 2T6</fullName>
    </recommendedName>
    <alternativeName>
        <fullName>OST703</fullName>
    </alternativeName>
    <alternativeName>
        <fullName>Olfactory receptor 2T9</fullName>
    </alternativeName>
</protein>
<feature type="chain" id="PRO_0000150501" description="Olfactory receptor 2T6">
    <location>
        <begin position="1"/>
        <end position="308"/>
    </location>
</feature>
<feature type="topological domain" description="Extracellular" evidence="1">
    <location>
        <begin position="1"/>
        <end position="28"/>
    </location>
</feature>
<feature type="transmembrane region" description="Helical; Name=1" evidence="1">
    <location>
        <begin position="29"/>
        <end position="49"/>
    </location>
</feature>
<feature type="topological domain" description="Cytoplasmic" evidence="1">
    <location>
        <begin position="50"/>
        <end position="57"/>
    </location>
</feature>
<feature type="transmembrane region" description="Helical; Name=2" evidence="1">
    <location>
        <begin position="58"/>
        <end position="78"/>
    </location>
</feature>
<feature type="topological domain" description="Extracellular" evidence="1">
    <location>
        <begin position="79"/>
        <end position="98"/>
    </location>
</feature>
<feature type="transmembrane region" description="Helical; Name=3" evidence="1">
    <location>
        <begin position="99"/>
        <end position="119"/>
    </location>
</feature>
<feature type="topological domain" description="Cytoplasmic" evidence="1">
    <location>
        <begin position="120"/>
        <end position="145"/>
    </location>
</feature>
<feature type="transmembrane region" description="Helical; Name=4" evidence="1">
    <location>
        <begin position="146"/>
        <end position="166"/>
    </location>
</feature>
<feature type="topological domain" description="Extracellular" evidence="1">
    <location>
        <begin position="167"/>
        <end position="203"/>
    </location>
</feature>
<feature type="transmembrane region" description="Helical; Name=5" evidence="1">
    <location>
        <begin position="204"/>
        <end position="224"/>
    </location>
</feature>
<feature type="topological domain" description="Cytoplasmic" evidence="1">
    <location>
        <begin position="225"/>
        <end position="236"/>
    </location>
</feature>
<feature type="transmembrane region" description="Helical; Name=6" evidence="1">
    <location>
        <begin position="237"/>
        <end position="257"/>
    </location>
</feature>
<feature type="topological domain" description="Extracellular" evidence="1">
    <location>
        <begin position="258"/>
        <end position="271"/>
    </location>
</feature>
<feature type="transmembrane region" description="Helical; Name=7" evidence="1">
    <location>
        <begin position="272"/>
        <end position="292"/>
    </location>
</feature>
<feature type="topological domain" description="Cytoplasmic" evidence="1">
    <location>
        <begin position="293"/>
        <end position="308"/>
    </location>
</feature>
<feature type="glycosylation site" description="N-linked (GlcNAc...) asparagine" evidence="1">
    <location>
        <position position="5"/>
    </location>
</feature>
<feature type="disulfide bond" evidence="2">
    <location>
        <begin position="97"/>
        <end position="179"/>
    </location>
</feature>
<feature type="sequence variant" id="VAR_060001" description="In dbSNP:rs7417616.">
    <original>N</original>
    <variation>D</variation>
    <location>
        <position position="21"/>
    </location>
</feature>
<feature type="sequence variant" id="VAR_060002" description="In dbSNP:rs6587467.">
    <original>C</original>
    <variation>G</variation>
    <location>
        <position position="23"/>
    </location>
</feature>
<feature type="sequence variant" id="VAR_053152" description="In dbSNP:rs6693032.">
    <original>T</original>
    <variation>N</variation>
    <location>
        <position position="57"/>
    </location>
</feature>
<feature type="sequence variant" id="VAR_053153" description="In dbSNP:rs6701129.">
    <original>L</original>
    <variation>P</variation>
    <location>
        <position position="159"/>
    </location>
</feature>
<feature type="sequence variant" id="VAR_053154" description="In dbSNP:rs954475.">
    <original>S</original>
    <variation>A</variation>
    <location>
        <position position="243"/>
    </location>
</feature>